<feature type="initiator methionine" description="Removed" evidence="3">
    <location>
        <position position="1"/>
    </location>
</feature>
<feature type="chain" id="PRO_0000304733" description="Ribosome maturation protein SBDS">
    <location>
        <begin position="2"/>
        <end position="250"/>
    </location>
</feature>
<feature type="modified residue" description="N-acetylserine" evidence="3">
    <location>
        <position position="2"/>
    </location>
</feature>
<feature type="modified residue" description="Phosphoserine" evidence="2">
    <location>
        <position position="238"/>
    </location>
</feature>
<comment type="function">
    <text evidence="1">Required for the assembly of mature ribosomes and ribosome biogenesis. Together with EFL1, triggers the GTP-dependent release of EIF6 from 60S pre-ribosomes in the cytoplasm, thereby activating ribosomes for translation competence by allowing 80S ribosome assembly and facilitating EIF6 recycling to the nucleus, where it is required for 60S rRNA processing and nuclear export. Required for normal levels of protein synthesis. May play a role in cellular stress resistance. May play a role in cellular response to DNA damage. May play a role in cell proliferation (By similarity).</text>
</comment>
<comment type="subunit">
    <text evidence="3">Associates with the 60S ribosomal subunit. Interacts with NPM1, RPA1 and PRKDC. May interact with NIP7. Found in a complex consisting of 60S ribosomal subunit, SBDS and EFL1. Interacts with CLN3 (By similarity).</text>
</comment>
<comment type="subcellular location">
    <subcellularLocation>
        <location evidence="1">Cytoplasm</location>
    </subcellularLocation>
    <subcellularLocation>
        <location evidence="1">Nucleus</location>
        <location evidence="1">Nucleolus</location>
    </subcellularLocation>
    <subcellularLocation>
        <location evidence="1">Nucleus</location>
        <location evidence="1">Nucleoplasm</location>
    </subcellularLocation>
    <subcellularLocation>
        <location evidence="1">Cytoplasm</location>
        <location evidence="1">Cytoskeleton</location>
        <location evidence="1">Spindle</location>
    </subcellularLocation>
    <text evidence="1">Primarily detected in the cytoplasm, and at low levels in nucleus. Detected in the nucleolus during G1 and G2 phase of the cell cycle, and diffusely distributed in the nucleus during S phase. Detected at the mitotic spindle. Colocalizes with the microtubule organizing center during interphase (By similarity).</text>
</comment>
<comment type="similarity">
    <text evidence="4">Belongs to the SDO1/SBDS family.</text>
</comment>
<proteinExistence type="evidence at transcript level"/>
<dbReference type="EMBL" id="BC086335">
    <property type="protein sequence ID" value="AAH86335.1"/>
    <property type="molecule type" value="mRNA"/>
</dbReference>
<dbReference type="RefSeq" id="NP_001008290.1">
    <property type="nucleotide sequence ID" value="NM_001008289.1"/>
</dbReference>
<dbReference type="BMRB" id="Q5RK30"/>
<dbReference type="SMR" id="Q5RK30"/>
<dbReference type="FunCoup" id="Q5RK30">
    <property type="interactions" value="2608"/>
</dbReference>
<dbReference type="IntAct" id="Q5RK30">
    <property type="interactions" value="1"/>
</dbReference>
<dbReference type="STRING" id="10116.ENSRNOP00000001190"/>
<dbReference type="iPTMnet" id="Q5RK30"/>
<dbReference type="PhosphoSitePlus" id="Q5RK30"/>
<dbReference type="jPOST" id="Q5RK30"/>
<dbReference type="PaxDb" id="10116-ENSRNOP00000001190"/>
<dbReference type="Ensembl" id="ENSRNOT00000107229.1">
    <property type="protein sequence ID" value="ENSRNOP00000093962.1"/>
    <property type="gene ID" value="ENSRNOG00000000888.4"/>
</dbReference>
<dbReference type="GeneID" id="288615"/>
<dbReference type="KEGG" id="rno:288615"/>
<dbReference type="AGR" id="RGD:1311043"/>
<dbReference type="CTD" id="51119"/>
<dbReference type="RGD" id="1311043">
    <property type="gene designation" value="Sbds"/>
</dbReference>
<dbReference type="eggNOG" id="KOG2917">
    <property type="taxonomic scope" value="Eukaryota"/>
</dbReference>
<dbReference type="GeneTree" id="ENSGT00390000008135"/>
<dbReference type="HOGENOM" id="CLU_043216_1_1_1"/>
<dbReference type="InParanoid" id="Q5RK30"/>
<dbReference type="OMA" id="AVNPQMD"/>
<dbReference type="OrthoDB" id="10253092at2759"/>
<dbReference type="PhylomeDB" id="Q5RK30"/>
<dbReference type="TreeFam" id="TF300881"/>
<dbReference type="PRO" id="PR:Q5RK30"/>
<dbReference type="Proteomes" id="UP000002494">
    <property type="component" value="Chromosome 12"/>
</dbReference>
<dbReference type="Bgee" id="ENSRNOG00000000888">
    <property type="expression patterns" value="Expressed in lung and 20 other cell types or tissues"/>
</dbReference>
<dbReference type="GO" id="GO:0005737">
    <property type="term" value="C:cytoplasm"/>
    <property type="evidence" value="ECO:0000266"/>
    <property type="project" value="RGD"/>
</dbReference>
<dbReference type="GO" id="GO:0005829">
    <property type="term" value="C:cytosol"/>
    <property type="evidence" value="ECO:0007669"/>
    <property type="project" value="Ensembl"/>
</dbReference>
<dbReference type="GO" id="GO:0005730">
    <property type="term" value="C:nucleolus"/>
    <property type="evidence" value="ECO:0000266"/>
    <property type="project" value="RGD"/>
</dbReference>
<dbReference type="GO" id="GO:0005654">
    <property type="term" value="C:nucleoplasm"/>
    <property type="evidence" value="ECO:0007669"/>
    <property type="project" value="UniProtKB-SubCell"/>
</dbReference>
<dbReference type="GO" id="GO:0005634">
    <property type="term" value="C:nucleus"/>
    <property type="evidence" value="ECO:0000266"/>
    <property type="project" value="RGD"/>
</dbReference>
<dbReference type="GO" id="GO:0000922">
    <property type="term" value="C:spindle pole"/>
    <property type="evidence" value="ECO:0000250"/>
    <property type="project" value="UniProtKB"/>
</dbReference>
<dbReference type="GO" id="GO:0008017">
    <property type="term" value="F:microtubule binding"/>
    <property type="evidence" value="ECO:0000266"/>
    <property type="project" value="RGD"/>
</dbReference>
<dbReference type="GO" id="GO:0043022">
    <property type="term" value="F:ribosome binding"/>
    <property type="evidence" value="ECO:0000250"/>
    <property type="project" value="UniProtKB"/>
</dbReference>
<dbReference type="GO" id="GO:0019843">
    <property type="term" value="F:rRNA binding"/>
    <property type="evidence" value="ECO:0000266"/>
    <property type="project" value="RGD"/>
</dbReference>
<dbReference type="GO" id="GO:0048539">
    <property type="term" value="P:bone marrow development"/>
    <property type="evidence" value="ECO:0000266"/>
    <property type="project" value="RGD"/>
</dbReference>
<dbReference type="GO" id="GO:0030282">
    <property type="term" value="P:bone mineralization"/>
    <property type="evidence" value="ECO:0000266"/>
    <property type="project" value="RGD"/>
</dbReference>
<dbReference type="GO" id="GO:0042256">
    <property type="term" value="P:cytosolic ribosome assembly"/>
    <property type="evidence" value="ECO:0000250"/>
    <property type="project" value="UniProtKB"/>
</dbReference>
<dbReference type="GO" id="GO:0002244">
    <property type="term" value="P:hematopoietic progenitor cell differentiation"/>
    <property type="evidence" value="ECO:0000250"/>
    <property type="project" value="UniProtKB"/>
</dbReference>
<dbReference type="GO" id="GO:0001833">
    <property type="term" value="P:inner cell mass cell proliferation"/>
    <property type="evidence" value="ECO:0000266"/>
    <property type="project" value="RGD"/>
</dbReference>
<dbReference type="GO" id="GO:0030595">
    <property type="term" value="P:leukocyte chemotaxis"/>
    <property type="evidence" value="ECO:0000266"/>
    <property type="project" value="RGD"/>
</dbReference>
<dbReference type="GO" id="GO:0007052">
    <property type="term" value="P:mitotic spindle organization"/>
    <property type="evidence" value="ECO:0000266"/>
    <property type="project" value="RGD"/>
</dbReference>
<dbReference type="GO" id="GO:0006364">
    <property type="term" value="P:rRNA processing"/>
    <property type="evidence" value="ECO:0000266"/>
    <property type="project" value="RGD"/>
</dbReference>
<dbReference type="FunFam" id="3.30.70.240:FF:000009">
    <property type="entry name" value="SBDS ribosome maturation factor"/>
    <property type="match status" value="1"/>
</dbReference>
<dbReference type="FunFam" id="1.10.10.900:FF:000001">
    <property type="entry name" value="SBDS, ribosome maturation factor"/>
    <property type="match status" value="1"/>
</dbReference>
<dbReference type="FunFam" id="3.30.1250.10:FF:000001">
    <property type="entry name" value="SBDS, ribosome maturation factor"/>
    <property type="match status" value="1"/>
</dbReference>
<dbReference type="Gene3D" id="3.30.70.240">
    <property type="match status" value="1"/>
</dbReference>
<dbReference type="Gene3D" id="3.30.1250.10">
    <property type="entry name" value="Ribosome maturation protein SBDS, N-terminal domain"/>
    <property type="match status" value="1"/>
</dbReference>
<dbReference type="Gene3D" id="1.10.10.900">
    <property type="entry name" value="SBDS protein C-terminal domain, subdomain 1"/>
    <property type="match status" value="1"/>
</dbReference>
<dbReference type="InterPro" id="IPR018023">
    <property type="entry name" value="Ribosome_mat_SBDS_CS"/>
</dbReference>
<dbReference type="InterPro" id="IPR036786">
    <property type="entry name" value="Ribosome_mat_SBDS_N_sf"/>
</dbReference>
<dbReference type="InterPro" id="IPR002140">
    <property type="entry name" value="Sdo1/SBDS"/>
</dbReference>
<dbReference type="InterPro" id="IPR039100">
    <property type="entry name" value="Sdo1/SBDS-like"/>
</dbReference>
<dbReference type="InterPro" id="IPR046928">
    <property type="entry name" value="SDO1/SBDS_C"/>
</dbReference>
<dbReference type="InterPro" id="IPR018978">
    <property type="entry name" value="SDO1/SBDS_central"/>
</dbReference>
<dbReference type="InterPro" id="IPR037188">
    <property type="entry name" value="Sdo1/SBDS_central_sf"/>
</dbReference>
<dbReference type="InterPro" id="IPR019783">
    <property type="entry name" value="SDO1/SBDS_N"/>
</dbReference>
<dbReference type="NCBIfam" id="TIGR00291">
    <property type="entry name" value="RNA_SBDS"/>
    <property type="match status" value="1"/>
</dbReference>
<dbReference type="PANTHER" id="PTHR10927">
    <property type="entry name" value="RIBOSOME MATURATION PROTEIN SBDS"/>
    <property type="match status" value="1"/>
</dbReference>
<dbReference type="PANTHER" id="PTHR10927:SF6">
    <property type="entry name" value="RIBOSOME MATURATION PROTEIN SBDS"/>
    <property type="match status" value="1"/>
</dbReference>
<dbReference type="Pfam" id="PF20268">
    <property type="entry name" value="SBDS_C"/>
    <property type="match status" value="1"/>
</dbReference>
<dbReference type="Pfam" id="PF09377">
    <property type="entry name" value="SBDS_domain_II"/>
    <property type="match status" value="1"/>
</dbReference>
<dbReference type="Pfam" id="PF01172">
    <property type="entry name" value="SBDS_N"/>
    <property type="match status" value="1"/>
</dbReference>
<dbReference type="SUPFAM" id="SSF89895">
    <property type="entry name" value="FYSH domain"/>
    <property type="match status" value="1"/>
</dbReference>
<dbReference type="SUPFAM" id="SSF109728">
    <property type="entry name" value="Hypothetical protein AF0491, middle domain"/>
    <property type="match status" value="1"/>
</dbReference>
<dbReference type="PROSITE" id="PS01267">
    <property type="entry name" value="UPF0023"/>
    <property type="match status" value="1"/>
</dbReference>
<evidence type="ECO:0000250" key="1"/>
<evidence type="ECO:0000250" key="2">
    <source>
        <dbReference type="UniProtKB" id="P70122"/>
    </source>
</evidence>
<evidence type="ECO:0000250" key="3">
    <source>
        <dbReference type="UniProtKB" id="Q9Y3A5"/>
    </source>
</evidence>
<evidence type="ECO:0000305" key="4"/>
<gene>
    <name type="primary">Sbds</name>
</gene>
<sequence length="250" mass="28752">MSIFTPTNQIRLTNVAVVRMKRGGKRFEIACYKNKVVGWRSGVEKDLDEVLQTHSVFVNVSKGQVAKKEDLISAFGTDDQTEICKQILTKGEVQVSDKERHTQLEQMFRDIATIVADKCVNPETKRPYTVILIERAMKDIHYSVKPNKSTKQQALEVIKQLKEKMKIERAHMRLRFLLPVNEGKKLKEKLKPLMKVVESEDYSQQLEIVCLIDPGCFREIDELIKKETKGKGSLEVLSLKDVEEGDEKFE</sequence>
<protein>
    <recommendedName>
        <fullName>Ribosome maturation protein SBDS</fullName>
    </recommendedName>
    <alternativeName>
        <fullName>Shwachman-Bodian-Diamond syndrome protein homolog</fullName>
    </alternativeName>
</protein>
<organism>
    <name type="scientific">Rattus norvegicus</name>
    <name type="common">Rat</name>
    <dbReference type="NCBI Taxonomy" id="10116"/>
    <lineage>
        <taxon>Eukaryota</taxon>
        <taxon>Metazoa</taxon>
        <taxon>Chordata</taxon>
        <taxon>Craniata</taxon>
        <taxon>Vertebrata</taxon>
        <taxon>Euteleostomi</taxon>
        <taxon>Mammalia</taxon>
        <taxon>Eutheria</taxon>
        <taxon>Euarchontoglires</taxon>
        <taxon>Glires</taxon>
        <taxon>Rodentia</taxon>
        <taxon>Myomorpha</taxon>
        <taxon>Muroidea</taxon>
        <taxon>Muridae</taxon>
        <taxon>Murinae</taxon>
        <taxon>Rattus</taxon>
    </lineage>
</organism>
<accession>Q5RK30</accession>
<keyword id="KW-0007">Acetylation</keyword>
<keyword id="KW-0963">Cytoplasm</keyword>
<keyword id="KW-0206">Cytoskeleton</keyword>
<keyword id="KW-0539">Nucleus</keyword>
<keyword id="KW-0597">Phosphoprotein</keyword>
<keyword id="KW-1185">Reference proteome</keyword>
<keyword id="KW-0690">Ribosome biogenesis</keyword>
<reference key="1">
    <citation type="journal article" date="2004" name="Genome Res.">
        <title>The status, quality, and expansion of the NIH full-length cDNA project: the Mammalian Gene Collection (MGC).</title>
        <authorList>
            <consortium name="The MGC Project Team"/>
        </authorList>
    </citation>
    <scope>NUCLEOTIDE SEQUENCE [LARGE SCALE MRNA]</scope>
    <source>
        <tissue>Ovary</tissue>
    </source>
</reference>
<name>SBDS_RAT</name>